<reference key="1">
    <citation type="journal article" date="1994" name="J. Mol. Evol.">
        <title>Speciation in the Artemia genus: mitochondrial DNA analysis of bisexual and parthenogenetic brine shrimps.</title>
        <authorList>
            <person name="Perez M.L."/>
            <person name="Valverde J.R."/>
            <person name="Batuecas B."/>
            <person name="Amat F."/>
            <person name="Marco R."/>
            <person name="Garesse R."/>
        </authorList>
    </citation>
    <scope>NUCLEOTIDE SEQUENCE [GENOMIC DNA]</scope>
</reference>
<organism>
    <name type="scientific">Artemia franciscana</name>
    <name type="common">Brine shrimp</name>
    <name type="synonym">Artemia sanfranciscana</name>
    <dbReference type="NCBI Taxonomy" id="6661"/>
    <lineage>
        <taxon>Eukaryota</taxon>
        <taxon>Metazoa</taxon>
        <taxon>Ecdysozoa</taxon>
        <taxon>Arthropoda</taxon>
        <taxon>Crustacea</taxon>
        <taxon>Branchiopoda</taxon>
        <taxon>Anostraca</taxon>
        <taxon>Artemiidae</taxon>
        <taxon>Artemia</taxon>
    </lineage>
</organism>
<evidence type="ECO:0000250" key="1"/>
<evidence type="ECO:0000255" key="2"/>
<evidence type="ECO:0000305" key="3"/>
<comment type="function">
    <text evidence="1">Core subunit of the mitochondrial membrane respiratory chain NADH dehydrogenase (Complex I) that is believed to belong to the minimal assembly required for catalysis. Complex I functions in the transfer of electrons from NADH to the respiratory chain. The immediate electron acceptor for the enzyme is believed to be ubiquinone (By similarity).</text>
</comment>
<comment type="catalytic activity">
    <reaction>
        <text>a ubiquinone + NADH + 5 H(+)(in) = a ubiquinol + NAD(+) + 4 H(+)(out)</text>
        <dbReference type="Rhea" id="RHEA:29091"/>
        <dbReference type="Rhea" id="RHEA-COMP:9565"/>
        <dbReference type="Rhea" id="RHEA-COMP:9566"/>
        <dbReference type="ChEBI" id="CHEBI:15378"/>
        <dbReference type="ChEBI" id="CHEBI:16389"/>
        <dbReference type="ChEBI" id="CHEBI:17976"/>
        <dbReference type="ChEBI" id="CHEBI:57540"/>
        <dbReference type="ChEBI" id="CHEBI:57945"/>
        <dbReference type="EC" id="7.1.1.2"/>
    </reaction>
</comment>
<comment type="subcellular location">
    <subcellularLocation>
        <location evidence="1">Mitochondrion inner membrane</location>
        <topology evidence="1">Multi-pass membrane protein</topology>
    </subcellularLocation>
</comment>
<comment type="similarity">
    <text evidence="3">Belongs to the complex I subunit 1 family.</text>
</comment>
<accession>Q37714</accession>
<dbReference type="EC" id="7.1.1.2"/>
<dbReference type="EMBL" id="X69067">
    <property type="protein sequence ID" value="CAA48818.1"/>
    <property type="molecule type" value="Genomic_DNA"/>
</dbReference>
<dbReference type="PIR" id="S60649">
    <property type="entry name" value="S60649"/>
</dbReference>
<dbReference type="RefSeq" id="NP_007120.1">
    <property type="nucleotide sequence ID" value="NC_001620.1"/>
</dbReference>
<dbReference type="SMR" id="Q37714"/>
<dbReference type="GeneID" id="807793"/>
<dbReference type="KEGG" id="afra:807793"/>
<dbReference type="CTD" id="4535"/>
<dbReference type="GO" id="GO:0005743">
    <property type="term" value="C:mitochondrial inner membrane"/>
    <property type="evidence" value="ECO:0007669"/>
    <property type="project" value="UniProtKB-SubCell"/>
</dbReference>
<dbReference type="GO" id="GO:0008137">
    <property type="term" value="F:NADH dehydrogenase (ubiquinone) activity"/>
    <property type="evidence" value="ECO:0007669"/>
    <property type="project" value="UniProtKB-EC"/>
</dbReference>
<dbReference type="GO" id="GO:0009060">
    <property type="term" value="P:aerobic respiration"/>
    <property type="evidence" value="ECO:0007669"/>
    <property type="project" value="TreeGrafter"/>
</dbReference>
<dbReference type="HAMAP" id="MF_01350">
    <property type="entry name" value="NDH1_NuoH"/>
    <property type="match status" value="1"/>
</dbReference>
<dbReference type="InterPro" id="IPR001694">
    <property type="entry name" value="NADH_UbQ_OxRdtase_su1/FPO"/>
</dbReference>
<dbReference type="InterPro" id="IPR018086">
    <property type="entry name" value="NADH_UbQ_OxRdtase_su1_CS"/>
</dbReference>
<dbReference type="PANTHER" id="PTHR11432">
    <property type="entry name" value="NADH DEHYDROGENASE SUBUNIT 1"/>
    <property type="match status" value="1"/>
</dbReference>
<dbReference type="PANTHER" id="PTHR11432:SF3">
    <property type="entry name" value="NADH-UBIQUINONE OXIDOREDUCTASE CHAIN 1"/>
    <property type="match status" value="1"/>
</dbReference>
<dbReference type="Pfam" id="PF00146">
    <property type="entry name" value="NADHdh"/>
    <property type="match status" value="1"/>
</dbReference>
<dbReference type="PROSITE" id="PS00667">
    <property type="entry name" value="COMPLEX1_ND1_1"/>
    <property type="match status" value="1"/>
</dbReference>
<dbReference type="PROSITE" id="PS00668">
    <property type="entry name" value="COMPLEX1_ND1_2"/>
    <property type="match status" value="1"/>
</dbReference>
<name>NU1M_ARTSF</name>
<sequence length="298" mass="33763">MIYFIFLQVVMVLVSVAFLTLLERKILGYIQLRKGPNKVGFLGILQPFSDGVKLFCKEVSLPLVSNFMPYLVAPVFSLFLSFFLWTLVPFISYGAKFNLSFLLVICAMSVSVYSIMVAGWSSNSKYSLLGSIRAGAQTISYEVSLIIIILSPLMLFKKLDLEGYLVKSSYVGWPLYLCLPLGLCWFTTILAETNRTPFDLAEGESELVSGFNTEYMGVGFALIMLSEYASILFMSLLFSVVFGSMSFLMFCLVVYSYLWSRGSYPRYRYDNLMHLCWKSLLPTSLMFLCFYWSLSQGG</sequence>
<gene>
    <name type="primary">ND1</name>
    <name type="synonym">ND-1</name>
</gene>
<geneLocation type="mitochondrion"/>
<proteinExistence type="inferred from homology"/>
<protein>
    <recommendedName>
        <fullName>NADH-ubiquinone oxidoreductase chain 1</fullName>
        <ecNumber>7.1.1.2</ecNumber>
    </recommendedName>
    <alternativeName>
        <fullName>NADH dehydrogenase subunit 1</fullName>
    </alternativeName>
</protein>
<feature type="chain" id="PRO_0000117347" description="NADH-ubiquinone oxidoreductase chain 1">
    <location>
        <begin position="1"/>
        <end position="298"/>
    </location>
</feature>
<feature type="transmembrane region" description="Helical" evidence="2">
    <location>
        <begin position="2"/>
        <end position="22"/>
    </location>
</feature>
<feature type="transmembrane region" description="Helical" evidence="2">
    <location>
        <begin position="71"/>
        <end position="91"/>
    </location>
</feature>
<feature type="transmembrane region" description="Helical" evidence="2">
    <location>
        <begin position="99"/>
        <end position="119"/>
    </location>
</feature>
<feature type="transmembrane region" description="Helical" evidence="2">
    <location>
        <begin position="136"/>
        <end position="156"/>
    </location>
</feature>
<feature type="transmembrane region" description="Helical" evidence="2">
    <location>
        <begin position="171"/>
        <end position="191"/>
    </location>
</feature>
<feature type="transmembrane region" description="Helical" evidence="2">
    <location>
        <begin position="231"/>
        <end position="251"/>
    </location>
</feature>
<feature type="transmembrane region" description="Helical" evidence="2">
    <location>
        <begin position="272"/>
        <end position="292"/>
    </location>
</feature>
<keyword id="KW-0249">Electron transport</keyword>
<keyword id="KW-0472">Membrane</keyword>
<keyword id="KW-0496">Mitochondrion</keyword>
<keyword id="KW-0999">Mitochondrion inner membrane</keyword>
<keyword id="KW-0520">NAD</keyword>
<keyword id="KW-0679">Respiratory chain</keyword>
<keyword id="KW-1278">Translocase</keyword>
<keyword id="KW-0812">Transmembrane</keyword>
<keyword id="KW-1133">Transmembrane helix</keyword>
<keyword id="KW-0813">Transport</keyword>
<keyword id="KW-0830">Ubiquinone</keyword>